<gene>
    <name type="primary">PPP6R1</name>
    <name type="synonym">KIAA1115</name>
    <name type="synonym">PP6R1</name>
    <name type="synonym">SAPS1</name>
</gene>
<proteinExistence type="evidence at protein level"/>
<sequence>MFWKFDLHTSSHLDTLLEREDLSLPELLDEEDVLQECKVVNRKLLDFLLQPPHLQAMVAWVTQEPPDSGEERLRYKYPSVACEILTSDVPQINDALGADESLLNRLYGFLQSTGSLNPLLASFFSKVMGILINRKTDQLVSFLRKKDDFVDLLLQHIGTSAIMDLLLRLLTCVERPQLRQDVVNWLNEEKIVQRLIEQIHPSKDENQHSNASQSLCDIIRLSREQMIQVQDSPEPDQLLATLEKQETIEQLLSNMFEGEQSQSVIVSGIQVLLTLLEPRRPRSESVTVNSFFSSVDGQLELLAQGALESTVSSVGALHALRPRLSCFHQLLLEPPKLEPLQMTWGMLAPPLGNTRLHVVKLLASALSANDAALTHELLALDVPNTMLDLFFHYVFNNFLHAQVEGCVSTMLSLGPPPDSSPETPIQNPVVKHLLQQCRLVERILTSWEENDRVQCAGGPRKGYMGHLTRVAGALVQNTEKGPNAEQLRQLLKELPSEQQEQWEAFVSGPLAETNKKNMVDLVNTHHLHSSSDDEDDRLKEFNFPEEAVLQQAFMDFQMQRMTSAFIDHFGFNDEEFGEQEESVNAPFDKTANITFSLNADDENPNANLLEICYKDRIQQFDDDEEEEDEEEAQGSGESDGEDGAWQGSQLARGARLGQPPGVRSGGSTDSEDEEEEDEEEEEDEEGIGCAARGGATPLSYPSPGPQPPGPSWTATFDPVPTDAPTSPRVSGEEELHTGPPAPQGPLSVPQGLPTQSLASPPARDALQLRSQDPTPPSAPQEATEGSKVTEPSAPCQALVSIGDLQATFHGIRSAPSSSDSATRDPSTSVPASGAHQPPQTTEGEKSPEPLGLPQSQSAQALTPPPIPNGSAPEGPASPGSQ</sequence>
<comment type="function">
    <text evidence="3">Regulatory subunit of protein phosphatase 6 (PP6). May function as a scaffolding PP6 subunit. Involved in the PP6-mediated dephosphorylation of NFKBIE opposing its degradation in response to TNF-alpha.</text>
</comment>
<comment type="subunit">
    <text evidence="3 4">Protein phosphatase 6 (PP6) holoenzyme is proposed to be a heterotrimeric complex formed of the catalytic subunit, a SAPS domain-containing subunit (PP6R) and an ankyrin repeat-domain containing regulatory subunit (ARS). Interacts with PPP6C and NFKBIE. Interacts with ANKRD28, ANKRD44 and ANKRD52.</text>
</comment>
<comment type="interaction">
    <interactant intactId="EBI-359745">
        <id>Q9UPN7</id>
    </interactant>
    <interactant intactId="EBI-359567">
        <id>O15084</id>
        <label>ANKRD28</label>
    </interactant>
    <organismsDiffer>false</organismsDiffer>
    <experiments>12</experiments>
</comment>
<comment type="interaction">
    <interactant intactId="EBI-359745">
        <id>Q9UPN7</id>
    </interactant>
    <interactant intactId="EBI-1245329">
        <id>Q8N8A2</id>
        <label>ANKRD44</label>
    </interactant>
    <organismsDiffer>false</organismsDiffer>
    <experiments>7</experiments>
</comment>
<comment type="interaction">
    <interactant intactId="EBI-359745">
        <id>Q9UPN7</id>
    </interactant>
    <interactant intactId="EBI-1996119">
        <id>Q8NB46</id>
        <label>ANKRD52</label>
    </interactant>
    <organismsDiffer>false</organismsDiffer>
    <experiments>6</experiments>
</comment>
<comment type="interaction">
    <interactant intactId="EBI-359745">
        <id>Q9UPN7</id>
    </interactant>
    <interactant intactId="EBI-355098">
        <id>O00221</id>
        <label>NFKBIE</label>
    </interactant>
    <organismsDiffer>false</organismsDiffer>
    <experiments>2</experiments>
</comment>
<comment type="interaction">
    <interactant intactId="EBI-359745">
        <id>Q9UPN7</id>
    </interactant>
    <interactant intactId="EBI-359751">
        <id>O00743</id>
        <label>PPP6C</label>
    </interactant>
    <organismsDiffer>false</organismsDiffer>
    <experiments>15</experiments>
</comment>
<comment type="subcellular location">
    <subcellularLocation>
        <location evidence="3 4">Cytoplasm</location>
    </subcellularLocation>
</comment>
<comment type="tissue specificity">
    <text evidence="3">Ubiquitous with higher expression in testis.</text>
</comment>
<comment type="similarity">
    <text evidence="5">Belongs to the SAPS family.</text>
</comment>
<comment type="sequence caution" evidence="5">
    <conflict type="erroneous initiation">
        <sequence resource="EMBL-CDS" id="BAA83067"/>
    </conflict>
    <text>Extended N-terminus.</text>
</comment>
<evidence type="ECO:0000250" key="1">
    <source>
        <dbReference type="UniProtKB" id="Q7TSI3"/>
    </source>
</evidence>
<evidence type="ECO:0000256" key="2">
    <source>
        <dbReference type="SAM" id="MobiDB-lite"/>
    </source>
</evidence>
<evidence type="ECO:0000269" key="3">
    <source>
    </source>
</evidence>
<evidence type="ECO:0000269" key="4">
    <source>
    </source>
</evidence>
<evidence type="ECO:0000305" key="5"/>
<evidence type="ECO:0007744" key="6">
    <source>
    </source>
</evidence>
<evidence type="ECO:0007744" key="7">
    <source>
    </source>
</evidence>
<evidence type="ECO:0007744" key="8">
    <source>
    </source>
</evidence>
<evidence type="ECO:0007744" key="9">
    <source>
    </source>
</evidence>
<evidence type="ECO:0007744" key="10">
    <source>
    </source>
</evidence>
<evidence type="ECO:0007744" key="11">
    <source>
    </source>
</evidence>
<accession>Q9UPN7</accession>
<accession>Q2M2H3</accession>
<accession>Q504V2</accession>
<accession>Q6NVJ6</accession>
<accession>Q9BU97</accession>
<dbReference type="EMBL" id="AB029038">
    <property type="protein sequence ID" value="BAA83067.3"/>
    <property type="status" value="ALT_INIT"/>
    <property type="molecule type" value="mRNA"/>
</dbReference>
<dbReference type="EMBL" id="BC002799">
    <property type="protein sequence ID" value="AAH02799.2"/>
    <property type="molecule type" value="mRNA"/>
</dbReference>
<dbReference type="EMBL" id="BC068014">
    <property type="protein sequence ID" value="AAH68014.1"/>
    <property type="molecule type" value="mRNA"/>
</dbReference>
<dbReference type="EMBL" id="BC094753">
    <property type="protein sequence ID" value="AAH94753.2"/>
    <property type="molecule type" value="mRNA"/>
</dbReference>
<dbReference type="CCDS" id="CCDS46186.1"/>
<dbReference type="RefSeq" id="NP_055746.3">
    <property type="nucleotide sequence ID" value="NM_014931.3"/>
</dbReference>
<dbReference type="RefSeq" id="XP_047294377.1">
    <property type="nucleotide sequence ID" value="XM_047438421.1"/>
</dbReference>
<dbReference type="RefSeq" id="XP_054176200.1">
    <property type="nucleotide sequence ID" value="XM_054320225.1"/>
</dbReference>
<dbReference type="SMR" id="Q9UPN7"/>
<dbReference type="BioGRID" id="116537">
    <property type="interactions" value="203"/>
</dbReference>
<dbReference type="CORUM" id="Q9UPN7"/>
<dbReference type="DIP" id="DIP-27589N"/>
<dbReference type="FunCoup" id="Q9UPN7">
    <property type="interactions" value="3533"/>
</dbReference>
<dbReference type="IntAct" id="Q9UPN7">
    <property type="interactions" value="125"/>
</dbReference>
<dbReference type="MINT" id="Q9UPN7"/>
<dbReference type="STRING" id="9606.ENSP00000414202"/>
<dbReference type="ChEMBL" id="CHEMBL4105774"/>
<dbReference type="GlyGen" id="Q9UPN7">
    <property type="glycosylation" value="3 sites, 1 O-linked glycan (1 site)"/>
</dbReference>
<dbReference type="iPTMnet" id="Q9UPN7"/>
<dbReference type="PhosphoSitePlus" id="Q9UPN7"/>
<dbReference type="BioMuta" id="PPP6R1"/>
<dbReference type="DMDM" id="261260102"/>
<dbReference type="jPOST" id="Q9UPN7"/>
<dbReference type="MassIVE" id="Q9UPN7"/>
<dbReference type="PaxDb" id="9606-ENSP00000414202"/>
<dbReference type="PeptideAtlas" id="Q9UPN7"/>
<dbReference type="ProteomicsDB" id="85391"/>
<dbReference type="Pumba" id="Q9UPN7"/>
<dbReference type="Antibodypedia" id="33046">
    <property type="antibodies" value="60 antibodies from 18 providers"/>
</dbReference>
<dbReference type="DNASU" id="22870"/>
<dbReference type="Ensembl" id="ENST00000412770.7">
    <property type="protein sequence ID" value="ENSP00000414202.1"/>
    <property type="gene ID" value="ENSG00000105063.19"/>
</dbReference>
<dbReference type="Ensembl" id="ENST00000587283.5">
    <property type="protein sequence ID" value="ENSP00000467521.1"/>
    <property type="gene ID" value="ENSG00000105063.19"/>
</dbReference>
<dbReference type="GeneID" id="22870"/>
<dbReference type="KEGG" id="hsa:22870"/>
<dbReference type="MANE-Select" id="ENST00000412770.7">
    <property type="protein sequence ID" value="ENSP00000414202.1"/>
    <property type="RefSeq nucleotide sequence ID" value="NM_014931.4"/>
    <property type="RefSeq protein sequence ID" value="NP_055746.3"/>
</dbReference>
<dbReference type="UCSC" id="uc002qjw.5">
    <property type="organism name" value="human"/>
</dbReference>
<dbReference type="AGR" id="HGNC:29195"/>
<dbReference type="CTD" id="22870"/>
<dbReference type="DisGeNET" id="22870"/>
<dbReference type="GeneCards" id="PPP6R1"/>
<dbReference type="HGNC" id="HGNC:29195">
    <property type="gene designation" value="PPP6R1"/>
</dbReference>
<dbReference type="HPA" id="ENSG00000105063">
    <property type="expression patterns" value="Low tissue specificity"/>
</dbReference>
<dbReference type="MIM" id="610875">
    <property type="type" value="gene"/>
</dbReference>
<dbReference type="neXtProt" id="NX_Q9UPN7"/>
<dbReference type="OpenTargets" id="ENSG00000105063"/>
<dbReference type="PharmGKB" id="PA165394108"/>
<dbReference type="VEuPathDB" id="HostDB:ENSG00000105063"/>
<dbReference type="eggNOG" id="KOG2073">
    <property type="taxonomic scope" value="Eukaryota"/>
</dbReference>
<dbReference type="GeneTree" id="ENSGT00390000009899"/>
<dbReference type="HOGENOM" id="CLU_012598_0_0_1"/>
<dbReference type="InParanoid" id="Q9UPN7"/>
<dbReference type="OMA" id="ECKSHNP"/>
<dbReference type="OrthoDB" id="295029at2759"/>
<dbReference type="PAN-GO" id="Q9UPN7">
    <property type="GO annotations" value="4 GO annotations based on evolutionary models"/>
</dbReference>
<dbReference type="PhylomeDB" id="Q9UPN7"/>
<dbReference type="TreeFam" id="TF313227"/>
<dbReference type="PathwayCommons" id="Q9UPN7"/>
<dbReference type="Reactome" id="R-HSA-204005">
    <property type="pathway name" value="COPII-mediated vesicle transport"/>
</dbReference>
<dbReference type="SignaLink" id="Q9UPN7"/>
<dbReference type="BioGRID-ORCS" id="22870">
    <property type="hits" value="25 hits in 1156 CRISPR screens"/>
</dbReference>
<dbReference type="ChiTaRS" id="PPP6R1">
    <property type="organism name" value="human"/>
</dbReference>
<dbReference type="GenomeRNAi" id="22870"/>
<dbReference type="Pharos" id="Q9UPN7">
    <property type="development level" value="Tbio"/>
</dbReference>
<dbReference type="PRO" id="PR:Q9UPN7"/>
<dbReference type="Proteomes" id="UP000005640">
    <property type="component" value="Chromosome 19"/>
</dbReference>
<dbReference type="RNAct" id="Q9UPN7">
    <property type="molecule type" value="protein"/>
</dbReference>
<dbReference type="Bgee" id="ENSG00000105063">
    <property type="expression patterns" value="Expressed in left testis and 98 other cell types or tissues"/>
</dbReference>
<dbReference type="ExpressionAtlas" id="Q9UPN7">
    <property type="expression patterns" value="baseline and differential"/>
</dbReference>
<dbReference type="GO" id="GO:0005829">
    <property type="term" value="C:cytosol"/>
    <property type="evidence" value="ECO:0000314"/>
    <property type="project" value="HPA"/>
</dbReference>
<dbReference type="GO" id="GO:0005634">
    <property type="term" value="C:nucleus"/>
    <property type="evidence" value="ECO:0000318"/>
    <property type="project" value="GO_Central"/>
</dbReference>
<dbReference type="GO" id="GO:0019903">
    <property type="term" value="F:protein phosphatase binding"/>
    <property type="evidence" value="ECO:0007669"/>
    <property type="project" value="InterPro"/>
</dbReference>
<dbReference type="GO" id="GO:0019888">
    <property type="term" value="F:protein phosphatase regulator activity"/>
    <property type="evidence" value="ECO:0000314"/>
    <property type="project" value="MGI"/>
</dbReference>
<dbReference type="GO" id="GO:0031267">
    <property type="term" value="F:small GTPase binding"/>
    <property type="evidence" value="ECO:0000353"/>
    <property type="project" value="UniProtKB"/>
</dbReference>
<dbReference type="GO" id="GO:0009966">
    <property type="term" value="P:regulation of signal transduction"/>
    <property type="evidence" value="ECO:0000318"/>
    <property type="project" value="GO_Central"/>
</dbReference>
<dbReference type="InterPro" id="IPR016024">
    <property type="entry name" value="ARM-type_fold"/>
</dbReference>
<dbReference type="InterPro" id="IPR007587">
    <property type="entry name" value="SAPS"/>
</dbReference>
<dbReference type="PANTHER" id="PTHR12634:SF13">
    <property type="entry name" value="SERINE_THREONINE-PROTEIN PHOSPHATASE 6 REGULATORY SUBUNIT 1"/>
    <property type="match status" value="1"/>
</dbReference>
<dbReference type="PANTHER" id="PTHR12634">
    <property type="entry name" value="SIT4 YEAST -ASSOCIATING PROTEIN-RELATED"/>
    <property type="match status" value="1"/>
</dbReference>
<dbReference type="Pfam" id="PF04499">
    <property type="entry name" value="SAPS"/>
    <property type="match status" value="2"/>
</dbReference>
<dbReference type="SUPFAM" id="SSF48371">
    <property type="entry name" value="ARM repeat"/>
    <property type="match status" value="1"/>
</dbReference>
<protein>
    <recommendedName>
        <fullName>Serine/threonine-protein phosphatase 6 regulatory subunit 1</fullName>
    </recommendedName>
    <alternativeName>
        <fullName>SAPS domain family member 1</fullName>
    </alternativeName>
</protein>
<keyword id="KW-0963">Cytoplasm</keyword>
<keyword id="KW-0597">Phosphoprotein</keyword>
<keyword id="KW-1267">Proteomics identification</keyword>
<keyword id="KW-1185">Reference proteome</keyword>
<organism>
    <name type="scientific">Homo sapiens</name>
    <name type="common">Human</name>
    <dbReference type="NCBI Taxonomy" id="9606"/>
    <lineage>
        <taxon>Eukaryota</taxon>
        <taxon>Metazoa</taxon>
        <taxon>Chordata</taxon>
        <taxon>Craniata</taxon>
        <taxon>Vertebrata</taxon>
        <taxon>Euteleostomi</taxon>
        <taxon>Mammalia</taxon>
        <taxon>Eutheria</taxon>
        <taxon>Euarchontoglires</taxon>
        <taxon>Primates</taxon>
        <taxon>Haplorrhini</taxon>
        <taxon>Catarrhini</taxon>
        <taxon>Hominidae</taxon>
        <taxon>Homo</taxon>
    </lineage>
</organism>
<reference key="1">
    <citation type="journal article" date="1999" name="DNA Res.">
        <title>Prediction of the coding sequences of unidentified human genes. XIV. The complete sequences of 100 new cDNA clones from brain which code for large proteins in vitro.</title>
        <authorList>
            <person name="Kikuno R."/>
            <person name="Nagase T."/>
            <person name="Ishikawa K."/>
            <person name="Hirosawa M."/>
            <person name="Miyajima N."/>
            <person name="Tanaka A."/>
            <person name="Kotani H."/>
            <person name="Nomura N."/>
            <person name="Ohara O."/>
        </authorList>
    </citation>
    <scope>NUCLEOTIDE SEQUENCE [LARGE SCALE MRNA]</scope>
    <source>
        <tissue>Brain</tissue>
    </source>
</reference>
<reference key="2">
    <citation type="submission" date="2005-01" db="EMBL/GenBank/DDBJ databases">
        <authorList>
            <person name="Ohara O."/>
            <person name="Nagase T."/>
            <person name="Kikuno R."/>
        </authorList>
    </citation>
    <scope>SEQUENCE REVISION</scope>
</reference>
<reference key="3">
    <citation type="journal article" date="2004" name="Genome Res.">
        <title>The status, quality, and expansion of the NIH full-length cDNA project: the Mammalian Gene Collection (MGC).</title>
        <authorList>
            <consortium name="The MGC Project Team"/>
        </authorList>
    </citation>
    <scope>NUCLEOTIDE SEQUENCE [LARGE SCALE MRNA]</scope>
    <source>
        <tissue>Lymph</tissue>
        <tissue>Skin</tissue>
        <tissue>Testis</tissue>
    </source>
</reference>
<reference key="4">
    <citation type="journal article" date="2006" name="Cell">
        <title>Global, in vivo, and site-specific phosphorylation dynamics in signaling networks.</title>
        <authorList>
            <person name="Olsen J.V."/>
            <person name="Blagoev B."/>
            <person name="Gnad F."/>
            <person name="Macek B."/>
            <person name="Kumar C."/>
            <person name="Mortensen P."/>
            <person name="Mann M."/>
        </authorList>
    </citation>
    <scope>IDENTIFICATION BY MASS SPECTROMETRY [LARGE SCALE ANALYSIS]</scope>
    <source>
        <tissue>Cervix carcinoma</tissue>
    </source>
</reference>
<reference key="5">
    <citation type="journal article" date="2006" name="J. Biol. Chem.">
        <title>Protein phosphatase 6 subunit with conserved Sit4-associated protein domain targets IkappaBepsilon.</title>
        <authorList>
            <person name="Stefansson B."/>
            <person name="Brautigan D.L."/>
        </authorList>
    </citation>
    <scope>FUNCTION</scope>
    <scope>INTERACTION WITH PPP6C AND NFKBIE</scope>
    <scope>SUBCELLULAR LOCATION</scope>
    <scope>TISSUE SPECIFICITY</scope>
</reference>
<reference key="6">
    <citation type="journal article" date="2008" name="Biochemistry">
        <title>Protein phosphatase 6 regulatory subunits composed of ankyrin repeat domains.</title>
        <authorList>
            <person name="Stefansson B."/>
            <person name="Ohama T."/>
            <person name="Daugherty A.E."/>
            <person name="Brautigan D.L."/>
        </authorList>
    </citation>
    <scope>INTERACTION WITH PPP6C; ANKRD28; ANKRD44 AND ANKRD52</scope>
    <scope>SUBCELLULAR LOCATION</scope>
</reference>
<reference key="7">
    <citation type="journal article" date="2008" name="Mol. Cell">
        <title>Kinase-selective enrichment enables quantitative phosphoproteomics of the kinome across the cell cycle.</title>
        <authorList>
            <person name="Daub H."/>
            <person name="Olsen J.V."/>
            <person name="Bairlein M."/>
            <person name="Gnad F."/>
            <person name="Oppermann F.S."/>
            <person name="Korner R."/>
            <person name="Greff Z."/>
            <person name="Keri G."/>
            <person name="Stemmann O."/>
            <person name="Mann M."/>
        </authorList>
    </citation>
    <scope>PHOSPHORYLATION [LARGE SCALE ANALYSIS] AT SER-759</scope>
    <scope>IDENTIFICATION BY MASS SPECTROMETRY [LARGE SCALE ANALYSIS]</scope>
    <source>
        <tissue>Cervix carcinoma</tissue>
    </source>
</reference>
<reference key="8">
    <citation type="journal article" date="2008" name="Proc. Natl. Acad. Sci. U.S.A.">
        <title>A quantitative atlas of mitotic phosphorylation.</title>
        <authorList>
            <person name="Dephoure N."/>
            <person name="Zhou C."/>
            <person name="Villen J."/>
            <person name="Beausoleil S.A."/>
            <person name="Bakalarski C.E."/>
            <person name="Elledge S.J."/>
            <person name="Gygi S.P."/>
        </authorList>
    </citation>
    <scope>PHOSPHORYLATION [LARGE SCALE ANALYSIS] AT SER-635; SER-638 AND SER-759</scope>
    <scope>IDENTIFICATION BY MASS SPECTROMETRY [LARGE SCALE ANALYSIS]</scope>
    <source>
        <tissue>Cervix carcinoma</tissue>
    </source>
</reference>
<reference key="9">
    <citation type="journal article" date="2009" name="Sci. Signal.">
        <title>Quantitative phosphoproteomic analysis of T cell receptor signaling reveals system-wide modulation of protein-protein interactions.</title>
        <authorList>
            <person name="Mayya V."/>
            <person name="Lundgren D.H."/>
            <person name="Hwang S.-I."/>
            <person name="Rezaul K."/>
            <person name="Wu L."/>
            <person name="Eng J.K."/>
            <person name="Rodionov V."/>
            <person name="Han D.K."/>
        </authorList>
    </citation>
    <scope>PHOSPHORYLATION [LARGE SCALE ANALYSIS] AT SER-635; SER-638; SER-702; SER-726 AND SER-759</scope>
    <scope>IDENTIFICATION BY MASS SPECTROMETRY [LARGE SCALE ANALYSIS]</scope>
    <source>
        <tissue>Leukemic T-cell</tissue>
    </source>
</reference>
<reference key="10">
    <citation type="journal article" date="2010" name="Sci. Signal.">
        <title>Quantitative phosphoproteomics reveals widespread full phosphorylation site occupancy during mitosis.</title>
        <authorList>
            <person name="Olsen J.V."/>
            <person name="Vermeulen M."/>
            <person name="Santamaria A."/>
            <person name="Kumar C."/>
            <person name="Miller M.L."/>
            <person name="Jensen L.J."/>
            <person name="Gnad F."/>
            <person name="Cox J."/>
            <person name="Jensen T.S."/>
            <person name="Nigg E.A."/>
            <person name="Brunak S."/>
            <person name="Mann M."/>
        </authorList>
    </citation>
    <scope>IDENTIFICATION BY MASS SPECTROMETRY [LARGE SCALE ANALYSIS]</scope>
    <source>
        <tissue>Cervix carcinoma</tissue>
    </source>
</reference>
<reference key="11">
    <citation type="journal article" date="2011" name="BMC Syst. Biol.">
        <title>Initial characterization of the human central proteome.</title>
        <authorList>
            <person name="Burkard T.R."/>
            <person name="Planyavsky M."/>
            <person name="Kaupe I."/>
            <person name="Breitwieser F.P."/>
            <person name="Buerckstuemmer T."/>
            <person name="Bennett K.L."/>
            <person name="Superti-Furga G."/>
            <person name="Colinge J."/>
        </authorList>
    </citation>
    <scope>IDENTIFICATION BY MASS SPECTROMETRY [LARGE SCALE ANALYSIS]</scope>
</reference>
<reference key="12">
    <citation type="journal article" date="2011" name="Sci. Signal.">
        <title>System-wide temporal characterization of the proteome and phosphoproteome of human embryonic stem cell differentiation.</title>
        <authorList>
            <person name="Rigbolt K.T."/>
            <person name="Prokhorova T.A."/>
            <person name="Akimov V."/>
            <person name="Henningsen J."/>
            <person name="Johansen P.T."/>
            <person name="Kratchmarova I."/>
            <person name="Kassem M."/>
            <person name="Mann M."/>
            <person name="Olsen J.V."/>
            <person name="Blagoev B."/>
        </authorList>
    </citation>
    <scope>PHOSPHORYLATION [LARGE SCALE ANALYSIS] AT THR-524; SER-635 AND SER-638</scope>
    <scope>IDENTIFICATION BY MASS SPECTROMETRY [LARGE SCALE ANALYSIS]</scope>
</reference>
<reference key="13">
    <citation type="journal article" date="2013" name="J. Proteome Res.">
        <title>Toward a comprehensive characterization of a human cancer cell phosphoproteome.</title>
        <authorList>
            <person name="Zhou H."/>
            <person name="Di Palma S."/>
            <person name="Preisinger C."/>
            <person name="Peng M."/>
            <person name="Polat A.N."/>
            <person name="Heck A.J."/>
            <person name="Mohammed S."/>
        </authorList>
    </citation>
    <scope>PHOSPHORYLATION [LARGE SCALE ANALYSIS] AT SER-529; SER-530 AND SER-531</scope>
    <scope>IDENTIFICATION BY MASS SPECTROMETRY [LARGE SCALE ANALYSIS]</scope>
    <source>
        <tissue>Cervix carcinoma</tissue>
        <tissue>Erythroleukemia</tissue>
    </source>
</reference>
<reference key="14">
    <citation type="journal article" date="2014" name="J. Proteomics">
        <title>An enzyme assisted RP-RPLC approach for in-depth analysis of human liver phosphoproteome.</title>
        <authorList>
            <person name="Bian Y."/>
            <person name="Song C."/>
            <person name="Cheng K."/>
            <person name="Dong M."/>
            <person name="Wang F."/>
            <person name="Huang J."/>
            <person name="Sun D."/>
            <person name="Wang L."/>
            <person name="Ye M."/>
            <person name="Zou H."/>
        </authorList>
    </citation>
    <scope>PHOSPHORYLATION [LARGE SCALE ANALYSIS] AT SER-529</scope>
    <scope>IDENTIFICATION BY MASS SPECTROMETRY [LARGE SCALE ANALYSIS]</scope>
    <source>
        <tissue>Liver</tissue>
    </source>
</reference>
<name>PP6R1_HUMAN</name>
<feature type="chain" id="PRO_0000046096" description="Serine/threonine-protein phosphatase 6 regulatory subunit 1">
    <location>
        <begin position="1"/>
        <end position="881"/>
    </location>
</feature>
<feature type="region of interest" description="Interaction with PPP6C">
    <location>
        <begin position="10"/>
        <end position="403"/>
    </location>
</feature>
<feature type="region of interest" description="Disordered" evidence="2">
    <location>
        <begin position="621"/>
        <end position="881"/>
    </location>
</feature>
<feature type="compositionally biased region" description="Acidic residues" evidence="2">
    <location>
        <begin position="621"/>
        <end position="642"/>
    </location>
</feature>
<feature type="compositionally biased region" description="Acidic residues" evidence="2">
    <location>
        <begin position="669"/>
        <end position="686"/>
    </location>
</feature>
<feature type="compositionally biased region" description="Pro residues" evidence="2">
    <location>
        <begin position="700"/>
        <end position="710"/>
    </location>
</feature>
<feature type="compositionally biased region" description="Polar residues" evidence="2">
    <location>
        <begin position="814"/>
        <end position="830"/>
    </location>
</feature>
<feature type="modified residue" description="Phosphoserine" evidence="1">
    <location>
        <position position="232"/>
    </location>
</feature>
<feature type="modified residue" description="Phosphothreonine" evidence="9">
    <location>
        <position position="524"/>
    </location>
</feature>
<feature type="modified residue" description="Phosphoserine" evidence="10 11">
    <location>
        <position position="529"/>
    </location>
</feature>
<feature type="modified residue" description="Phosphoserine" evidence="10">
    <location>
        <position position="530"/>
    </location>
</feature>
<feature type="modified residue" description="Phosphoserine" evidence="10">
    <location>
        <position position="531"/>
    </location>
</feature>
<feature type="modified residue" description="Phosphoserine" evidence="6 8 9">
    <location>
        <position position="635"/>
    </location>
</feature>
<feature type="modified residue" description="Phosphoserine" evidence="6 8 9">
    <location>
        <position position="638"/>
    </location>
</feature>
<feature type="modified residue" description="Phosphoserine" evidence="8">
    <location>
        <position position="702"/>
    </location>
</feature>
<feature type="modified residue" description="Phosphoserine" evidence="8">
    <location>
        <position position="726"/>
    </location>
</feature>
<feature type="modified residue" description="Phosphoserine" evidence="6 7 8">
    <location>
        <position position="759"/>
    </location>
</feature>
<feature type="modified residue" description="Phosphoserine" evidence="1">
    <location>
        <position position="846"/>
    </location>
</feature>